<name>OSPA7_BORBG</name>
<organism>
    <name type="scientific">Borreliella burgdorferi</name>
    <name type="common">Lyme disease spirochete</name>
    <name type="synonym">Borrelia burgdorferi</name>
    <dbReference type="NCBI Taxonomy" id="139"/>
    <lineage>
        <taxon>Bacteria</taxon>
        <taxon>Pseudomonadati</taxon>
        <taxon>Spirochaetota</taxon>
        <taxon>Spirochaetia</taxon>
        <taxon>Spirochaetales</taxon>
        <taxon>Borreliaceae</taxon>
        <taxon>Borreliella</taxon>
    </lineage>
</organism>
<feature type="signal peptide" evidence="1">
    <location>
        <begin position="1"/>
        <end position="16"/>
    </location>
</feature>
<feature type="chain" id="PRO_0000018080" description="Outer surface protein A" evidence="1">
    <location>
        <begin position="17"/>
        <end position="272"/>
    </location>
</feature>
<feature type="lipid moiety-binding region" description="N-palmitoyl cysteine" evidence="1">
    <location>
        <position position="17"/>
    </location>
</feature>
<feature type="lipid moiety-binding region" description="S-diacylglycerol cysteine" evidence="1">
    <location>
        <position position="17"/>
    </location>
</feature>
<protein>
    <recommendedName>
        <fullName evidence="2">Outer surface protein A</fullName>
        <shortName evidence="2">OspA</shortName>
    </recommendedName>
</protein>
<reference key="1">
    <citation type="journal article" date="1992" name="Infect. Immun.">
        <title>Evaluation of genetic divergence among Borrelia burgdorferi isolates by use of OspA, fla, HSP60, and HSP70 gene probes.</title>
        <authorList>
            <person name="Wallich R."/>
            <person name="Helmes C."/>
            <person name="Schaible U.E."/>
            <person name="Lobet Y."/>
            <person name="Moter S.E."/>
            <person name="Kramer M.D."/>
            <person name="Simon M.M."/>
        </authorList>
    </citation>
    <scope>NUCLEOTIDE SEQUENCE [GENOMIC DNA]</scope>
    <source>
        <strain>19857</strain>
    </source>
</reference>
<keyword id="KW-0998">Cell outer membrane</keyword>
<keyword id="KW-0449">Lipoprotein</keyword>
<keyword id="KW-0472">Membrane</keyword>
<keyword id="KW-0564">Palmitate</keyword>
<keyword id="KW-0614">Plasmid</keyword>
<keyword id="KW-0732">Signal</keyword>
<comment type="subcellular location">
    <subcellularLocation>
        <location evidence="4">Cell outer membrane</location>
        <topology evidence="1">Lipid-anchor</topology>
    </subcellularLocation>
    <subcellularLocation>
        <location evidence="4">Cell surface</location>
    </subcellularLocation>
</comment>
<comment type="similarity">
    <text evidence="3">Belongs to the OspA lipoprotein family.</text>
</comment>
<proteinExistence type="inferred from homology"/>
<accession>Q04968</accession>
<sequence>MKKYLLGIGLILALIACKQNVSSLDEKNSVSVDVPGGMKVLVSKEKNKDGKYDLMATVDNVDLKGTSDKNNGSGILEGVKADKSKVKLTVADDLSKTTLEVLKEDGTVVSRKVTSKDKSTTEAKFNEKGELSEKTMTRANGTTLEYSQMTNEDNAAKAVETLKNGIKFEGNLASGKTAVEIKEGTVTLKREIDKNGKVTVSLNDTASGSKKTASWQESTSTLTISANSKKTKDLVFLTNGTITVQNYDSAGTKLEGSAAEIKKLDELKNALR</sequence>
<evidence type="ECO:0000255" key="1">
    <source>
        <dbReference type="PROSITE-ProRule" id="PRU00303"/>
    </source>
</evidence>
<evidence type="ECO:0000303" key="2">
    <source>
    </source>
</evidence>
<evidence type="ECO:0000305" key="3"/>
<evidence type="ECO:0000305" key="4">
    <source>
    </source>
</evidence>
<geneLocation type="plasmid">
    <name>lp54</name>
</geneLocation>
<gene>
    <name evidence="2" type="primary">ospA</name>
</gene>
<dbReference type="EMBL" id="X68059">
    <property type="protein sequence ID" value="CAA48196.1"/>
    <property type="molecule type" value="Genomic_DNA"/>
</dbReference>
<dbReference type="PIR" id="C49209">
    <property type="entry name" value="C49209"/>
</dbReference>
<dbReference type="SMR" id="Q04968"/>
<dbReference type="GO" id="GO:0009279">
    <property type="term" value="C:cell outer membrane"/>
    <property type="evidence" value="ECO:0007669"/>
    <property type="project" value="UniProtKB-SubCell"/>
</dbReference>
<dbReference type="GO" id="GO:0009986">
    <property type="term" value="C:cell surface"/>
    <property type="evidence" value="ECO:0007669"/>
    <property type="project" value="UniProtKB-SubCell"/>
</dbReference>
<dbReference type="GO" id="GO:0141025">
    <property type="term" value="P:adhesion of symbiont to host cell surface via host glycoprotein"/>
    <property type="evidence" value="ECO:0000269"/>
    <property type="project" value="SigSci"/>
</dbReference>
<dbReference type="GO" id="GO:0007155">
    <property type="term" value="P:cell adhesion"/>
    <property type="evidence" value="ECO:0000314"/>
    <property type="project" value="CACAO"/>
</dbReference>
<dbReference type="FunFam" id="2.40.128.160:FF:000001">
    <property type="entry name" value="Outer surface protein A"/>
    <property type="match status" value="1"/>
</dbReference>
<dbReference type="FunFam" id="3.90.930.1:FF:000001">
    <property type="entry name" value="Outer surface protein A"/>
    <property type="match status" value="1"/>
</dbReference>
<dbReference type="Gene3D" id="3.90.930.1">
    <property type="match status" value="1"/>
</dbReference>
<dbReference type="Gene3D" id="2.40.128.160">
    <property type="entry name" value="C1 set domains (antibody constant domain-like)"/>
    <property type="match status" value="1"/>
</dbReference>
<dbReference type="InterPro" id="IPR001809">
    <property type="entry name" value="OM_lipoprot_Borrelia"/>
</dbReference>
<dbReference type="InterPro" id="IPR023322">
    <property type="entry name" value="OM_lipoprot_dom_sf"/>
</dbReference>
<dbReference type="Pfam" id="PF00820">
    <property type="entry name" value="Lipoprotein_1"/>
    <property type="match status" value="1"/>
</dbReference>
<dbReference type="PRINTS" id="PR00968">
    <property type="entry name" value="OUTRSURFACE"/>
</dbReference>
<dbReference type="SUPFAM" id="SSF51087">
    <property type="entry name" value="Outer surface protein"/>
    <property type="match status" value="1"/>
</dbReference>
<dbReference type="PROSITE" id="PS51257">
    <property type="entry name" value="PROKAR_LIPOPROTEIN"/>
    <property type="match status" value="1"/>
</dbReference>